<proteinExistence type="inferred from homology"/>
<sequence>MGINETMMFKVDNEKENEAKEILVSVHQALKEKGYNPINQMVGYILSGDPTYITNYKNARSIVRRLERDELLEEVLKFYLENHNNEPE</sequence>
<evidence type="ECO:0000255" key="1">
    <source>
        <dbReference type="HAMAP-Rule" id="MF_01507"/>
    </source>
</evidence>
<comment type="similarity">
    <text evidence="1">Belongs to the UPF0297 family.</text>
</comment>
<accession>B8I4S8</accession>
<dbReference type="EMBL" id="CP001348">
    <property type="protein sequence ID" value="ACL76582.1"/>
    <property type="molecule type" value="Genomic_DNA"/>
</dbReference>
<dbReference type="RefSeq" id="WP_015925674.1">
    <property type="nucleotide sequence ID" value="NC_011898.1"/>
</dbReference>
<dbReference type="SMR" id="B8I4S8"/>
<dbReference type="STRING" id="394503.Ccel_2240"/>
<dbReference type="KEGG" id="cce:Ccel_2240"/>
<dbReference type="eggNOG" id="COG4472">
    <property type="taxonomic scope" value="Bacteria"/>
</dbReference>
<dbReference type="HOGENOM" id="CLU_162466_0_0_9"/>
<dbReference type="OrthoDB" id="9796303at2"/>
<dbReference type="Proteomes" id="UP000001349">
    <property type="component" value="Chromosome"/>
</dbReference>
<dbReference type="HAMAP" id="MF_01507">
    <property type="entry name" value="UPF0297"/>
    <property type="match status" value="1"/>
</dbReference>
<dbReference type="InterPro" id="IPR009309">
    <property type="entry name" value="IreB"/>
</dbReference>
<dbReference type="NCBIfam" id="NF003997">
    <property type="entry name" value="PRK05473.1"/>
    <property type="match status" value="1"/>
</dbReference>
<dbReference type="PANTHER" id="PTHR40067">
    <property type="entry name" value="UPF0297 PROTEIN YRZL"/>
    <property type="match status" value="1"/>
</dbReference>
<dbReference type="PANTHER" id="PTHR40067:SF1">
    <property type="entry name" value="UPF0297 PROTEIN YRZL"/>
    <property type="match status" value="1"/>
</dbReference>
<dbReference type="Pfam" id="PF06135">
    <property type="entry name" value="IreB"/>
    <property type="match status" value="1"/>
</dbReference>
<dbReference type="PIRSF" id="PIRSF037258">
    <property type="entry name" value="DUF965_bac"/>
    <property type="match status" value="1"/>
</dbReference>
<organism>
    <name type="scientific">Ruminiclostridium cellulolyticum (strain ATCC 35319 / DSM 5812 / JCM 6584 / H10)</name>
    <name type="common">Clostridium cellulolyticum</name>
    <dbReference type="NCBI Taxonomy" id="394503"/>
    <lineage>
        <taxon>Bacteria</taxon>
        <taxon>Bacillati</taxon>
        <taxon>Bacillota</taxon>
        <taxon>Clostridia</taxon>
        <taxon>Eubacteriales</taxon>
        <taxon>Oscillospiraceae</taxon>
        <taxon>Ruminiclostridium</taxon>
    </lineage>
</organism>
<name>Y2240_RUMCH</name>
<feature type="chain" id="PRO_1000185040" description="UPF0297 protein Ccel_2240">
    <location>
        <begin position="1"/>
        <end position="88"/>
    </location>
</feature>
<protein>
    <recommendedName>
        <fullName evidence="1">UPF0297 protein Ccel_2240</fullName>
    </recommendedName>
</protein>
<keyword id="KW-1185">Reference proteome</keyword>
<reference key="1">
    <citation type="submission" date="2009-01" db="EMBL/GenBank/DDBJ databases">
        <title>Complete sequence of Clostridium cellulolyticum H10.</title>
        <authorList>
            <consortium name="US DOE Joint Genome Institute"/>
            <person name="Lucas S."/>
            <person name="Copeland A."/>
            <person name="Lapidus A."/>
            <person name="Glavina del Rio T."/>
            <person name="Dalin E."/>
            <person name="Tice H."/>
            <person name="Bruce D."/>
            <person name="Goodwin L."/>
            <person name="Pitluck S."/>
            <person name="Chertkov O."/>
            <person name="Saunders E."/>
            <person name="Brettin T."/>
            <person name="Detter J.C."/>
            <person name="Han C."/>
            <person name="Larimer F."/>
            <person name="Land M."/>
            <person name="Hauser L."/>
            <person name="Kyrpides N."/>
            <person name="Ivanova N."/>
            <person name="Zhou J."/>
            <person name="Richardson P."/>
        </authorList>
    </citation>
    <scope>NUCLEOTIDE SEQUENCE [LARGE SCALE GENOMIC DNA]</scope>
    <source>
        <strain>ATCC 35319 / DSM 5812 / JCM 6584 / H10</strain>
    </source>
</reference>
<gene>
    <name type="ordered locus">Ccel_2240</name>
</gene>